<gene>
    <name type="primary">ext1a</name>
</gene>
<evidence type="ECO:0000250" key="1"/>
<evidence type="ECO:0000250" key="2">
    <source>
        <dbReference type="UniProtKB" id="Q9ES89"/>
    </source>
</evidence>
<evidence type="ECO:0000255" key="3"/>
<evidence type="ECO:0000269" key="4">
    <source>
    </source>
</evidence>
<evidence type="ECO:0000305" key="5"/>
<keyword id="KW-1015">Disulfide bond</keyword>
<keyword id="KW-0256">Endoplasmic reticulum</keyword>
<keyword id="KW-0325">Glycoprotein</keyword>
<keyword id="KW-0328">Glycosyltransferase</keyword>
<keyword id="KW-0464">Manganese</keyword>
<keyword id="KW-0472">Membrane</keyword>
<keyword id="KW-0479">Metal-binding</keyword>
<keyword id="KW-1185">Reference proteome</keyword>
<keyword id="KW-0735">Signal-anchor</keyword>
<keyword id="KW-0808">Transferase</keyword>
<keyword id="KW-0812">Transmembrane</keyword>
<keyword id="KW-1133">Transmembrane helix</keyword>
<accession>Q5IGR8</accession>
<dbReference type="EC" id="2.4.1.224"/>
<dbReference type="EC" id="2.4.1.225"/>
<dbReference type="EMBL" id="AY734455">
    <property type="protein sequence ID" value="AAW29033.1"/>
    <property type="molecule type" value="mRNA"/>
</dbReference>
<dbReference type="SMR" id="Q5IGR8"/>
<dbReference type="FunCoup" id="Q5IGR8">
    <property type="interactions" value="98"/>
</dbReference>
<dbReference type="STRING" id="7955.ENSDARP00000135521"/>
<dbReference type="CAZy" id="GT47">
    <property type="family name" value="Glycosyltransferase Family 47"/>
</dbReference>
<dbReference type="CAZy" id="GT64">
    <property type="family name" value="Glycosyltransferase Family 64"/>
</dbReference>
<dbReference type="GlyCosmos" id="Q5IGR8">
    <property type="glycosylation" value="1 site, No reported glycans"/>
</dbReference>
<dbReference type="PaxDb" id="7955-ENSDARP00000003397"/>
<dbReference type="Ensembl" id="ENSDART00000159902">
    <property type="protein sequence ID" value="ENSDARP00000135521"/>
    <property type="gene ID" value="ENSDARG00000103155"/>
</dbReference>
<dbReference type="AGR" id="ZFIN:ZDB-GENE-050211-3"/>
<dbReference type="ZFIN" id="ZDB-GENE-050211-3">
    <property type="gene designation" value="ext1a"/>
</dbReference>
<dbReference type="eggNOG" id="KOG1021">
    <property type="taxonomic scope" value="Eukaryota"/>
</dbReference>
<dbReference type="InParanoid" id="Q5IGR8"/>
<dbReference type="OMA" id="DARCNKD"/>
<dbReference type="OrthoDB" id="1924787at2759"/>
<dbReference type="PhylomeDB" id="Q5IGR8"/>
<dbReference type="TreeFam" id="TF314231"/>
<dbReference type="UniPathway" id="UPA00378"/>
<dbReference type="PRO" id="PR:Q5IGR8"/>
<dbReference type="Proteomes" id="UP000000437">
    <property type="component" value="Unplaced"/>
</dbReference>
<dbReference type="Bgee" id="ENSDARG00000103155">
    <property type="expression patterns" value="Expressed in mature ovarian follicle and 39 other cell types or tissues"/>
</dbReference>
<dbReference type="GO" id="GO:0005789">
    <property type="term" value="C:endoplasmic reticulum membrane"/>
    <property type="evidence" value="ECO:0000250"/>
    <property type="project" value="UniProtKB"/>
</dbReference>
<dbReference type="GO" id="GO:0005794">
    <property type="term" value="C:Golgi apparatus"/>
    <property type="evidence" value="ECO:0000318"/>
    <property type="project" value="GO_Central"/>
</dbReference>
<dbReference type="GO" id="GO:0008375">
    <property type="term" value="F:acetylglucosaminyltransferase activity"/>
    <property type="evidence" value="ECO:0000318"/>
    <property type="project" value="GO_Central"/>
</dbReference>
<dbReference type="GO" id="GO:0050508">
    <property type="term" value="F:glucuronosyl-N-acetylglucosaminyl-proteoglycan 4-alpha-N-acetylglucosaminyltransferase activity"/>
    <property type="evidence" value="ECO:0000250"/>
    <property type="project" value="UniProtKB"/>
</dbReference>
<dbReference type="GO" id="GO:0015020">
    <property type="term" value="F:glucuronosyltransferase activity"/>
    <property type="evidence" value="ECO:0000318"/>
    <property type="project" value="GO_Central"/>
</dbReference>
<dbReference type="GO" id="GO:0046872">
    <property type="term" value="F:metal ion binding"/>
    <property type="evidence" value="ECO:0007669"/>
    <property type="project" value="UniProtKB-KW"/>
</dbReference>
<dbReference type="GO" id="GO:0050509">
    <property type="term" value="F:N-acetylglucosaminyl-proteoglycan 4-beta-glucuronosyltransferase activity"/>
    <property type="evidence" value="ECO:0000250"/>
    <property type="project" value="UniProtKB"/>
</dbReference>
<dbReference type="GO" id="GO:0015012">
    <property type="term" value="P:heparan sulfate proteoglycan biosynthetic process"/>
    <property type="evidence" value="ECO:0000250"/>
    <property type="project" value="UniProtKB"/>
</dbReference>
<dbReference type="GO" id="GO:0006486">
    <property type="term" value="P:protein glycosylation"/>
    <property type="evidence" value="ECO:0007669"/>
    <property type="project" value="UniProtKB-UniPathway"/>
</dbReference>
<dbReference type="FunFam" id="3.90.550.10:FF:000034">
    <property type="entry name" value="Exostosin 1"/>
    <property type="match status" value="1"/>
</dbReference>
<dbReference type="Gene3D" id="3.90.550.10">
    <property type="entry name" value="Spore Coat Polysaccharide Biosynthesis Protein SpsA, Chain A"/>
    <property type="match status" value="1"/>
</dbReference>
<dbReference type="InterPro" id="IPR004263">
    <property type="entry name" value="Exostosin"/>
</dbReference>
<dbReference type="InterPro" id="IPR040911">
    <property type="entry name" value="Exostosin_GT47"/>
</dbReference>
<dbReference type="InterPro" id="IPR015338">
    <property type="entry name" value="GT64_dom"/>
</dbReference>
<dbReference type="InterPro" id="IPR029044">
    <property type="entry name" value="Nucleotide-diphossugar_trans"/>
</dbReference>
<dbReference type="PANTHER" id="PTHR48261">
    <property type="entry name" value="ACETYLGLUCOSAMINYLTRANSFERASE"/>
    <property type="match status" value="1"/>
</dbReference>
<dbReference type="PANTHER" id="PTHR48261:SF3">
    <property type="entry name" value="EXOSTOSIN GLYCOSYLTRANSFERASE 1"/>
    <property type="match status" value="1"/>
</dbReference>
<dbReference type="Pfam" id="PF03016">
    <property type="entry name" value="Exostosin_GT47"/>
    <property type="match status" value="1"/>
</dbReference>
<dbReference type="Pfam" id="PF09258">
    <property type="entry name" value="Glyco_transf_64"/>
    <property type="match status" value="1"/>
</dbReference>
<dbReference type="SUPFAM" id="SSF53448">
    <property type="entry name" value="Nucleotide-diphospho-sugar transferases"/>
    <property type="match status" value="1"/>
</dbReference>
<protein>
    <recommendedName>
        <fullName>Exostosin-1a</fullName>
        <ecNumber>2.4.1.224</ecNumber>
        <ecNumber>2.4.1.225</ecNumber>
    </recommendedName>
    <alternativeName>
        <fullName>Glucuronosyl-N-acetylglucosaminyl-proteoglycan/N-acetylglucosaminyl-proteoglycan 4-alpha-N-acetylglucosaminyltransferase 1a</fullName>
    </alternativeName>
    <alternativeName>
        <fullName>Multiple exostoses protein 1 homolog a</fullName>
    </alternativeName>
</protein>
<feature type="chain" id="PRO_0000149659" description="Exostosin-1a">
    <location>
        <begin position="1"/>
        <end position="730"/>
    </location>
</feature>
<feature type="topological domain" description="Cytoplasmic" evidence="3">
    <location>
        <begin position="1"/>
        <end position="6"/>
    </location>
</feature>
<feature type="transmembrane region" description="Helical; Signal-anchor for type II membrane protein" evidence="3">
    <location>
        <begin position="7"/>
        <end position="27"/>
    </location>
</feature>
<feature type="topological domain" description="Lumenal" evidence="3">
    <location>
        <begin position="28"/>
        <end position="730"/>
    </location>
</feature>
<feature type="active site" evidence="2">
    <location>
        <position position="638"/>
    </location>
</feature>
<feature type="binding site" evidence="2">
    <location>
        <position position="533"/>
    </location>
    <ligand>
        <name>UDP-N-acetyl-alpha-D-glucosamine</name>
        <dbReference type="ChEBI" id="CHEBI:57705"/>
    </ligand>
</feature>
<feature type="binding site" evidence="2">
    <location>
        <position position="549"/>
    </location>
    <ligand>
        <name>UDP-N-acetyl-alpha-D-glucosamine</name>
        <dbReference type="ChEBI" id="CHEBI:57705"/>
    </ligand>
</feature>
<feature type="binding site" evidence="2">
    <location>
        <position position="550"/>
    </location>
    <ligand>
        <name>UDP-N-acetyl-alpha-D-glucosamine</name>
        <dbReference type="ChEBI" id="CHEBI:57705"/>
    </ligand>
</feature>
<feature type="binding site" evidence="2">
    <location>
        <position position="551"/>
    </location>
    <ligand>
        <name>Mn(2+)</name>
        <dbReference type="ChEBI" id="CHEBI:29035"/>
        <note>catalytic</note>
    </ligand>
</feature>
<feature type="binding site" evidence="2">
    <location>
        <position position="551"/>
    </location>
    <ligand>
        <name>UDP-N-acetyl-alpha-D-glucosamine</name>
        <dbReference type="ChEBI" id="CHEBI:57705"/>
    </ligand>
</feature>
<feature type="binding site" evidence="2">
    <location>
        <position position="637"/>
    </location>
    <ligand>
        <name>UDP-N-acetyl-alpha-D-glucosamine</name>
        <dbReference type="ChEBI" id="CHEBI:57705"/>
    </ligand>
</feature>
<feature type="binding site" evidence="2">
    <location>
        <position position="638"/>
    </location>
    <ligand>
        <name>UDP-N-acetyl-alpha-D-glucosamine</name>
        <dbReference type="ChEBI" id="CHEBI:57705"/>
    </ligand>
</feature>
<feature type="binding site" evidence="2">
    <location>
        <position position="685"/>
    </location>
    <ligand>
        <name>UDP-N-acetyl-alpha-D-glucosamine</name>
        <dbReference type="ChEBI" id="CHEBI:57705"/>
    </ligand>
</feature>
<feature type="glycosylation site" description="N-linked (GlcNAc...) asparagine" evidence="3">
    <location>
        <position position="314"/>
    </location>
</feature>
<feature type="disulfide bond" evidence="2">
    <location>
        <begin position="636"/>
        <end position="688"/>
    </location>
</feature>
<proteinExistence type="evidence at transcript level"/>
<organism>
    <name type="scientific">Danio rerio</name>
    <name type="common">Zebrafish</name>
    <name type="synonym">Brachydanio rerio</name>
    <dbReference type="NCBI Taxonomy" id="7955"/>
    <lineage>
        <taxon>Eukaryota</taxon>
        <taxon>Metazoa</taxon>
        <taxon>Chordata</taxon>
        <taxon>Craniata</taxon>
        <taxon>Vertebrata</taxon>
        <taxon>Euteleostomi</taxon>
        <taxon>Actinopterygii</taxon>
        <taxon>Neopterygii</taxon>
        <taxon>Teleostei</taxon>
        <taxon>Ostariophysi</taxon>
        <taxon>Cypriniformes</taxon>
        <taxon>Danionidae</taxon>
        <taxon>Danioninae</taxon>
        <taxon>Danio</taxon>
    </lineage>
</organism>
<reference key="1">
    <citation type="journal article" date="2005" name="Dev. Dyn.">
        <title>Distinct tissue-specificity of three zebrafish ext1 genes encoding proteoglycan modifying enzymes and their relationship to somitic Sonic hedgehog signaling.</title>
        <authorList>
            <person name="Siekmann A.F."/>
            <person name="Brand M."/>
        </authorList>
    </citation>
    <scope>NUCLEOTIDE SEQUENCE [MRNA]</scope>
    <scope>DEVELOPMENTAL STAGE</scope>
</reference>
<comment type="function">
    <text evidence="1">Glycosyltransferase required for the biosynthesis of heparan-sulfate.</text>
</comment>
<comment type="catalytic activity">
    <reaction>
        <text>3-O-{[(1-&gt;4)-beta-D-GlcA-(1-&gt;4)-alpha-D-GlcNAc](n)-(1-&gt;4)-beta-D-GlcA-(1-&gt;3)-beta-D-Gal-(1-&gt;3)-beta-D-Gal-(1-&gt;4)-beta-D-Xyl}-L-seryl-[protein] + UDP-N-acetyl-alpha-D-glucosamine = 3-O-{alpha-D-GlcNAc-[(1-&gt;4)-beta-D-GlcA-(1-&gt;4)-alpha-D-GlcNAc](n)-(1-&gt;4)-beta-D-GlcA-(1-&gt;3)-beta-D-Gal-(1-&gt;3)-beta-D-Gal-(1-&gt;4)-beta-D-Xyl}-L-seryl-[protein] + UDP + H(+)</text>
        <dbReference type="Rhea" id="RHEA:16213"/>
        <dbReference type="Rhea" id="RHEA-COMP:12621"/>
        <dbReference type="Rhea" id="RHEA-COMP:12623"/>
        <dbReference type="ChEBI" id="CHEBI:15378"/>
        <dbReference type="ChEBI" id="CHEBI:57705"/>
        <dbReference type="ChEBI" id="CHEBI:58223"/>
        <dbReference type="ChEBI" id="CHEBI:132415"/>
        <dbReference type="ChEBI" id="CHEBI:132416"/>
        <dbReference type="EC" id="2.4.1.224"/>
    </reaction>
</comment>
<comment type="catalytic activity">
    <reaction>
        <text>3-O-{alpha-D-GlcNAc-[(1-&gt;4)-beta-D-GlcA-(1-&gt;4)-alpha-D-GlcNAc](n)-(1-&gt;4)-beta-D-GlcA-(1-&gt;3)-beta-D-Gal-(1-&gt;3)-beta-D-Gal-(1-&gt;4)-beta-D-Xyl}-L-seryl-[protein] + UDP-alpha-D-glucuronate = 3-O-{[(1-&gt;4)-beta-D-GlcA-(1-&gt;4)-alpha-D-GlcNAc](n+1)-(1-&gt;4)-beta-D-GlcA-(1-&gt;3)-beta-D-Gal-(1-&gt;3)-beta-D-Gal-(1-&gt;4)-beta-D-Xyl}-L-seryl-[protein] + UDP + H(+)</text>
        <dbReference type="Rhea" id="RHEA:20908"/>
        <dbReference type="Rhea" id="RHEA-COMP:12623"/>
        <dbReference type="Rhea" id="RHEA-COMP:14295"/>
        <dbReference type="ChEBI" id="CHEBI:15378"/>
        <dbReference type="ChEBI" id="CHEBI:58052"/>
        <dbReference type="ChEBI" id="CHEBI:58223"/>
        <dbReference type="ChEBI" id="CHEBI:132415"/>
        <dbReference type="ChEBI" id="CHEBI:132416"/>
        <dbReference type="EC" id="2.4.1.225"/>
    </reaction>
</comment>
<comment type="cofactor">
    <cofactor evidence="2">
        <name>Mn(2+)</name>
        <dbReference type="ChEBI" id="CHEBI:29035"/>
    </cofactor>
</comment>
<comment type="pathway">
    <text>Protein modification; protein glycosylation.</text>
</comment>
<comment type="subcellular location">
    <subcellularLocation>
        <location evidence="1">Endoplasmic reticulum membrane</location>
        <topology evidence="1">Single-pass type II membrane protein</topology>
    </subcellularLocation>
</comment>
<comment type="developmental stage">
    <text evidence="4">Expressed both maternally and zygotically. During gastrulation, expressed in the neuroectoderm. At the 3-somite stage, expressed in the prospective forebrain, hindbrain and tailbud. From the 5-somite stage, expressed in the somitic mesoderm. At the 16-somite stage, also expressed in the dorsal neural tube, the eye and the Kupffer's vesicle. At 48 hours-post-fertilization (hpf), expression continues in the dorsal diencephalon and cerebellum and is observed in the otic vesicle.</text>
</comment>
<comment type="similarity">
    <text evidence="5">Belongs to the glycosyltransferase 47 family.</text>
</comment>
<name>EXT1A_DANRE</name>
<sequence>MQAKKRYLILFSAGVCLILLFYLQGPASRRTPKRGDDPHPHWPHFSDPLRAFIPWDQTETEDYNVRASPRHKRDDSTGADKCRMDSCFDFELCKRNGFKVYVYPQQKGEKISESYQNILSSIEGSRFYTSDPGQACLFVLNLDTLDRDQLSPQYVHNLKTKIQNLNLWNNGRNHLIFNLYSGTWPDYTEDLGFDIGQAMLAKASISTESFRPNFDISIPLFSKDHPRTGGERGFLKYNTIPPFRKYMLVFKGKRYLTGIGSDTRNALYHIHNAEDVVLLTTCKHGKDWQKHKDARCDKDNAEYDRYDYKEMLHNSTFCLVPRGRRLGSFRFLEALQAACVPVMLSNGWELPFSEIIDWRTAAVIGDERLLLQIPSTVRSIHQDRILSLRQQTQFLWEAYFSSVEKIVLTTLEIIQDRVLQHSAHSTLMWNRLPGGLFTLPQYSSYLGDFPFFYALLGIKPHQKFTAVIHAVTPLVSQSQPIFKLLVAVAKSQFCAQIMVLWNCDKPLPSKHRWPATSVPVIVIEGESKVMSSRFLPYENIITDAVLSLDEDTVLSTTEVDFAFTVWQSFPERIVGYPARSHFWDSNKERWGYTSKWTNDYSMVLTGAAFYHRYYNYLYTHYLPGSLKGLVDQLSNCEDILMNFLVSAVTKMPPIKVTQKKQYKETMMGQTSRASRWADPDHFAQRQTCMNKFASWFGTMPLVHSQMRLDPVLFRDQVSILRKKYRDIERL</sequence>